<organism>
    <name type="scientific">Ureaplasma parvum serovar 3 (strain ATCC 700970)</name>
    <dbReference type="NCBI Taxonomy" id="273119"/>
    <lineage>
        <taxon>Bacteria</taxon>
        <taxon>Bacillati</taxon>
        <taxon>Mycoplasmatota</taxon>
        <taxon>Mycoplasmoidales</taxon>
        <taxon>Mycoplasmoidaceae</taxon>
        <taxon>Ureaplasma</taxon>
    </lineage>
</organism>
<comment type="function">
    <text evidence="1">F(1)F(0) ATP synthase produces ATP from ADP in the presence of a proton or sodium gradient. F-type ATPases consist of two structural domains, F(1) containing the extramembraneous catalytic core and F(0) containing the membrane proton channel, linked together by a central stalk and a peripheral stalk. During catalysis, ATP synthesis in the catalytic domain of F(1) is coupled via a rotary mechanism of the central stalk subunits to proton translocation.</text>
</comment>
<comment type="function">
    <text evidence="1">This protein is part of the stalk that links CF(0) to CF(1). It either transmits conformational changes from CF(0) to CF(1) or is implicated in proton conduction.</text>
</comment>
<comment type="subunit">
    <text evidence="1">F-type ATPases have 2 components, F(1) - the catalytic core - and F(0) - the membrane proton channel. F(1) has five subunits: alpha(3), beta(3), gamma(1), delta(1), epsilon(1). F(0) has three main subunits: a(1), b(2) and c(10-14). The alpha and beta chains form an alternating ring which encloses part of the gamma chain. F(1) is attached to F(0) by a central stalk formed by the gamma and epsilon chains, while a peripheral stalk is formed by the delta and b chains.</text>
</comment>
<comment type="subcellular location">
    <subcellularLocation>
        <location evidence="1">Cell membrane</location>
        <topology evidence="1">Peripheral membrane protein</topology>
    </subcellularLocation>
</comment>
<comment type="similarity">
    <text evidence="1">Belongs to the ATPase delta chain family.</text>
</comment>
<sequence length="179" mass="20479">MKSSLKPVEKYAYSIFEIAKEEKKLDLYKHNLETINSIIEEVPAFFEAVGDPARDRNERKQIVIKNLEGEIDIYLISLIDLLIDVKSVKLLKKIVLKALDFVNEALSVKKVLITTAYELTKNQIDRLLQSLKKKYVCEKIEPIVVVDKSIIGGLSINFESQVLDNSLKTKLFNIVKKVN</sequence>
<protein>
    <recommendedName>
        <fullName evidence="1">ATP synthase subunit delta</fullName>
    </recommendedName>
    <alternativeName>
        <fullName evidence="1">ATP synthase F(1) sector subunit delta</fullName>
    </alternativeName>
    <alternativeName>
        <fullName evidence="1">F-type ATPase subunit delta</fullName>
        <shortName evidence="1">F-ATPase subunit delta</shortName>
    </alternativeName>
</protein>
<gene>
    <name evidence="1" type="primary">atpH</name>
    <name type="ordered locus">UU134</name>
</gene>
<dbReference type="EMBL" id="AF222894">
    <property type="protein sequence ID" value="AAF30540.1"/>
    <property type="molecule type" value="Genomic_DNA"/>
</dbReference>
<dbReference type="RefSeq" id="WP_006688889.1">
    <property type="nucleotide sequence ID" value="NC_002162.1"/>
</dbReference>
<dbReference type="SMR" id="Q9PR10"/>
<dbReference type="STRING" id="273119.UU134"/>
<dbReference type="EnsemblBacteria" id="AAF30540">
    <property type="protein sequence ID" value="AAF30540"/>
    <property type="gene ID" value="UU134"/>
</dbReference>
<dbReference type="GeneID" id="29672294"/>
<dbReference type="KEGG" id="uur:UU134"/>
<dbReference type="eggNOG" id="COG0712">
    <property type="taxonomic scope" value="Bacteria"/>
</dbReference>
<dbReference type="HOGENOM" id="CLU_085114_1_1_14"/>
<dbReference type="OrthoDB" id="400380at2"/>
<dbReference type="Proteomes" id="UP000000423">
    <property type="component" value="Chromosome"/>
</dbReference>
<dbReference type="GO" id="GO:0005886">
    <property type="term" value="C:plasma membrane"/>
    <property type="evidence" value="ECO:0007669"/>
    <property type="project" value="UniProtKB-SubCell"/>
</dbReference>
<dbReference type="GO" id="GO:0045259">
    <property type="term" value="C:proton-transporting ATP synthase complex"/>
    <property type="evidence" value="ECO:0007669"/>
    <property type="project" value="UniProtKB-KW"/>
</dbReference>
<dbReference type="GO" id="GO:0046933">
    <property type="term" value="F:proton-transporting ATP synthase activity, rotational mechanism"/>
    <property type="evidence" value="ECO:0007669"/>
    <property type="project" value="UniProtKB-UniRule"/>
</dbReference>
<dbReference type="Gene3D" id="1.10.520.20">
    <property type="entry name" value="N-terminal domain of the delta subunit of the F1F0-ATP synthase"/>
    <property type="match status" value="1"/>
</dbReference>
<dbReference type="HAMAP" id="MF_01416">
    <property type="entry name" value="ATP_synth_delta_bact"/>
    <property type="match status" value="1"/>
</dbReference>
<dbReference type="InterPro" id="IPR026015">
    <property type="entry name" value="ATP_synth_OSCP/delta_N_sf"/>
</dbReference>
<dbReference type="InterPro" id="IPR000711">
    <property type="entry name" value="ATPase_OSCP/dsu"/>
</dbReference>
<dbReference type="NCBIfam" id="TIGR01145">
    <property type="entry name" value="ATP_synt_delta"/>
    <property type="match status" value="1"/>
</dbReference>
<dbReference type="PANTHER" id="PTHR11910">
    <property type="entry name" value="ATP SYNTHASE DELTA CHAIN"/>
    <property type="match status" value="1"/>
</dbReference>
<dbReference type="Pfam" id="PF00213">
    <property type="entry name" value="OSCP"/>
    <property type="match status" value="1"/>
</dbReference>
<dbReference type="PRINTS" id="PR00125">
    <property type="entry name" value="ATPASEDELTA"/>
</dbReference>
<dbReference type="SUPFAM" id="SSF47928">
    <property type="entry name" value="N-terminal domain of the delta subunit of the F1F0-ATP synthase"/>
    <property type="match status" value="1"/>
</dbReference>
<accession>Q9PR10</accession>
<evidence type="ECO:0000255" key="1">
    <source>
        <dbReference type="HAMAP-Rule" id="MF_01416"/>
    </source>
</evidence>
<proteinExistence type="inferred from homology"/>
<reference key="1">
    <citation type="journal article" date="2000" name="Nature">
        <title>The complete sequence of the mucosal pathogen Ureaplasma urealyticum.</title>
        <authorList>
            <person name="Glass J.I."/>
            <person name="Lefkowitz E.J."/>
            <person name="Glass J.S."/>
            <person name="Heiner C.R."/>
            <person name="Chen E.Y."/>
            <person name="Cassell G.H."/>
        </authorList>
    </citation>
    <scope>NUCLEOTIDE SEQUENCE [LARGE SCALE GENOMIC DNA]</scope>
    <source>
        <strain>ATCC 700970</strain>
    </source>
</reference>
<name>ATPD_UREPA</name>
<feature type="chain" id="PRO_0000371188" description="ATP synthase subunit delta">
    <location>
        <begin position="1"/>
        <end position="179"/>
    </location>
</feature>
<keyword id="KW-0066">ATP synthesis</keyword>
<keyword id="KW-1003">Cell membrane</keyword>
<keyword id="KW-0139">CF(1)</keyword>
<keyword id="KW-0375">Hydrogen ion transport</keyword>
<keyword id="KW-0406">Ion transport</keyword>
<keyword id="KW-0472">Membrane</keyword>
<keyword id="KW-1185">Reference proteome</keyword>
<keyword id="KW-0813">Transport</keyword>